<organism>
    <name type="scientific">Bungarus candidus</name>
    <name type="common">Malayan krait</name>
    <dbReference type="NCBI Taxonomy" id="92438"/>
    <lineage>
        <taxon>Eukaryota</taxon>
        <taxon>Metazoa</taxon>
        <taxon>Chordata</taxon>
        <taxon>Craniata</taxon>
        <taxon>Vertebrata</taxon>
        <taxon>Euteleostomi</taxon>
        <taxon>Lepidosauria</taxon>
        <taxon>Squamata</taxon>
        <taxon>Bifurcata</taxon>
        <taxon>Unidentata</taxon>
        <taxon>Episquamata</taxon>
        <taxon>Toxicofera</taxon>
        <taxon>Serpentes</taxon>
        <taxon>Colubroidea</taxon>
        <taxon>Elapidae</taxon>
        <taxon>Bungarinae</taxon>
        <taxon>Bungarus</taxon>
    </lineage>
</organism>
<dbReference type="EMBL" id="AY057877">
    <property type="protein sequence ID" value="AAL30059.1"/>
    <property type="molecule type" value="mRNA"/>
</dbReference>
<dbReference type="PDB" id="2JQP">
    <property type="method" value="NMR"/>
    <property type="chains" value="A=22-86"/>
</dbReference>
<dbReference type="PDBsum" id="2JQP"/>
<dbReference type="BMRB" id="Q8AY51"/>
<dbReference type="SMR" id="Q8AY51"/>
<dbReference type="EvolutionaryTrace" id="Q8AY51"/>
<dbReference type="GO" id="GO:0005576">
    <property type="term" value="C:extracellular region"/>
    <property type="evidence" value="ECO:0007669"/>
    <property type="project" value="UniProtKB-SubCell"/>
</dbReference>
<dbReference type="GO" id="GO:0030550">
    <property type="term" value="F:acetylcholine receptor inhibitor activity"/>
    <property type="evidence" value="ECO:0007669"/>
    <property type="project" value="UniProtKB-KW"/>
</dbReference>
<dbReference type="GO" id="GO:0099106">
    <property type="term" value="F:ion channel regulator activity"/>
    <property type="evidence" value="ECO:0007669"/>
    <property type="project" value="UniProtKB-KW"/>
</dbReference>
<dbReference type="GO" id="GO:0090729">
    <property type="term" value="F:toxin activity"/>
    <property type="evidence" value="ECO:0007669"/>
    <property type="project" value="UniProtKB-KW"/>
</dbReference>
<dbReference type="CDD" id="cd00206">
    <property type="entry name" value="TFP_snake_toxin"/>
    <property type="match status" value="1"/>
</dbReference>
<dbReference type="Gene3D" id="2.10.60.10">
    <property type="entry name" value="CD59"/>
    <property type="match status" value="1"/>
</dbReference>
<dbReference type="InterPro" id="IPR003571">
    <property type="entry name" value="Snake_3FTx"/>
</dbReference>
<dbReference type="InterPro" id="IPR045860">
    <property type="entry name" value="Snake_toxin-like_sf"/>
</dbReference>
<dbReference type="InterPro" id="IPR018354">
    <property type="entry name" value="Snake_toxin_con_site"/>
</dbReference>
<dbReference type="InterPro" id="IPR054131">
    <property type="entry name" value="Toxin_cobra-type"/>
</dbReference>
<dbReference type="Pfam" id="PF21947">
    <property type="entry name" value="Toxin_cobra-type"/>
    <property type="match status" value="1"/>
</dbReference>
<dbReference type="SUPFAM" id="SSF57302">
    <property type="entry name" value="Snake toxin-like"/>
    <property type="match status" value="1"/>
</dbReference>
<dbReference type="PROSITE" id="PS00272">
    <property type="entry name" value="SNAKE_TOXIN"/>
    <property type="match status" value="1"/>
</dbReference>
<name>3NO21_BUNCA</name>
<keyword id="KW-0002">3D-structure</keyword>
<keyword id="KW-0008">Acetylcholine receptor inhibiting toxin</keyword>
<keyword id="KW-1015">Disulfide bond</keyword>
<keyword id="KW-0872">Ion channel impairing toxin</keyword>
<keyword id="KW-0528">Neurotoxin</keyword>
<keyword id="KW-0629">Postsynaptic neurotoxin</keyword>
<keyword id="KW-0964">Secreted</keyword>
<keyword id="KW-0732">Signal</keyword>
<keyword id="KW-0800">Toxin</keyword>
<feature type="signal peptide" evidence="2">
    <location>
        <begin position="1"/>
        <end position="23"/>
    </location>
</feature>
<feature type="chain" id="PRO_0000316184" description="Weak toxin 1">
    <location>
        <begin position="24"/>
        <end position="86"/>
    </location>
</feature>
<feature type="disulfide bond" evidence="3 7">
    <location>
        <begin position="24"/>
        <end position="45"/>
    </location>
</feature>
<feature type="disulfide bond" evidence="3 7">
    <location>
        <begin position="27"/>
        <end position="32"/>
    </location>
</feature>
<feature type="disulfide bond" evidence="3 7">
    <location>
        <begin position="38"/>
        <end position="63"/>
    </location>
</feature>
<feature type="disulfide bond" evidence="3 7">
    <location>
        <begin position="67"/>
        <end position="78"/>
    </location>
</feature>
<feature type="disulfide bond" evidence="3 7">
    <location>
        <begin position="79"/>
        <end position="84"/>
    </location>
</feature>
<feature type="strand" evidence="8">
    <location>
        <begin position="23"/>
        <end position="26"/>
    </location>
</feature>
<feature type="strand" evidence="8">
    <location>
        <begin position="28"/>
        <end position="31"/>
    </location>
</feature>
<feature type="strand" evidence="8">
    <location>
        <begin position="34"/>
        <end position="37"/>
    </location>
</feature>
<feature type="strand" evidence="8">
    <location>
        <begin position="44"/>
        <end position="52"/>
    </location>
</feature>
<feature type="turn" evidence="8">
    <location>
        <begin position="53"/>
        <end position="55"/>
    </location>
</feature>
<feature type="strand" evidence="8">
    <location>
        <begin position="56"/>
        <end position="65"/>
    </location>
</feature>
<feature type="strand" evidence="8">
    <location>
        <begin position="72"/>
        <end position="79"/>
    </location>
</feature>
<feature type="turn" evidence="8">
    <location>
        <begin position="82"/>
        <end position="84"/>
    </location>
</feature>
<protein>
    <recommendedName>
        <fullName evidence="6">Weak toxin 1</fullName>
    </recommendedName>
</protein>
<sequence length="86" mass="9713">MKTLLLTLVVVAIVCLDLGYTLTCLICPEKDCQKVHTCRNEEKICVKRFYDKNQLGWRAQRGCAVSCPKAKPNETVQCCSTDKCNK</sequence>
<comment type="function">
    <text evidence="1">Binds with low affinity to muscular (alpha-1-beta-1-delta-epsilon/CHRNA1-CHRNB1-CHRND-CHRNE) and very low affinity to neuronal (alpha-7/CHRNA7) nicotinic acetylcholine receptor (nAChR).</text>
</comment>
<comment type="subcellular location">
    <subcellularLocation>
        <location evidence="5">Secreted</location>
    </subcellularLocation>
</comment>
<comment type="tissue specificity">
    <text evidence="5">Expressed by the venom gland.</text>
</comment>
<comment type="similarity">
    <text evidence="4">Belongs to the three-finger toxin family. Ancestral subfamily. Orphan group II sub-subfamily.</text>
</comment>
<accession>Q8AY51</accession>
<evidence type="ECO:0000250" key="1">
    <source>
        <dbReference type="UniProtKB" id="O42255"/>
    </source>
</evidence>
<evidence type="ECO:0000255" key="2"/>
<evidence type="ECO:0000269" key="3">
    <source ref="2"/>
</evidence>
<evidence type="ECO:0000305" key="4"/>
<evidence type="ECO:0000305" key="5">
    <source ref="1"/>
</evidence>
<evidence type="ECO:0000312" key="6">
    <source>
        <dbReference type="EMBL" id="AAL30059.1"/>
    </source>
</evidence>
<evidence type="ECO:0000312" key="7">
    <source>
        <dbReference type="PDB" id="2JQP"/>
    </source>
</evidence>
<evidence type="ECO:0007829" key="8">
    <source>
        <dbReference type="PDB" id="2JQP"/>
    </source>
</evidence>
<proteinExistence type="evidence at protein level"/>
<reference key="1">
    <citation type="submission" date="2001-10" db="EMBL/GenBank/DDBJ databases">
        <title>Structural and functional genomics of Bungarus candidus.</title>
        <authorList>
            <person name="Tsai I.H."/>
            <person name="Wang Y.M."/>
            <person name="Hsu H.Y."/>
        </authorList>
    </citation>
    <scope>NUCLEOTIDE SEQUENCE [MRNA]</scope>
    <source>
        <tissue>Venom gland</tissue>
    </source>
</reference>
<reference key="2">
    <citation type="submission" date="2007-06" db="PDB data bank">
        <title>NMR solution structure of bungatoxin from Bungarus candidus (Malayan krait) venom.</title>
        <authorList>
            <person name="Vivekanandan S."/>
            <person name="Jois S.D."/>
            <person name="Kini R.M."/>
            <person name="Troncone L.R.P."/>
            <person name="De Magalhaes L."/>
            <person name="Ujikawa G.Y."/>
            <person name="Ramos A.T."/>
        </authorList>
    </citation>
    <scope>STRUCTURE BY NMR OF 22-86</scope>
    <scope>DISULFIDE BONDS</scope>
</reference>